<comment type="function">
    <text evidence="1">The heterodimer acts as both an ATP-dependent DNA helicase and an ATP-dependent, dual-direction single-stranded exonuclease. Recognizes the chi site generating a DNA molecule suitable for the initiation of homologous recombination. The AddA nuclease domain is required for chi fragment generation; this subunit has the helicase and 3' -&gt; 5' nuclease activities.</text>
</comment>
<comment type="catalytic activity">
    <reaction evidence="1">
        <text>Couples ATP hydrolysis with the unwinding of duplex DNA by translocating in the 3'-5' direction.</text>
        <dbReference type="EC" id="5.6.2.4"/>
    </reaction>
</comment>
<comment type="catalytic activity">
    <reaction evidence="1">
        <text>ATP + H2O = ADP + phosphate + H(+)</text>
        <dbReference type="Rhea" id="RHEA:13065"/>
        <dbReference type="ChEBI" id="CHEBI:15377"/>
        <dbReference type="ChEBI" id="CHEBI:15378"/>
        <dbReference type="ChEBI" id="CHEBI:30616"/>
        <dbReference type="ChEBI" id="CHEBI:43474"/>
        <dbReference type="ChEBI" id="CHEBI:456216"/>
        <dbReference type="EC" id="5.6.2.4"/>
    </reaction>
</comment>
<comment type="cofactor">
    <cofactor evidence="1">
        <name>Mg(2+)</name>
        <dbReference type="ChEBI" id="CHEBI:18420"/>
    </cofactor>
</comment>
<comment type="subunit">
    <text evidence="1">Heterodimer of AddA and AddB/RexB.</text>
</comment>
<comment type="similarity">
    <text evidence="1">Belongs to the helicase family. AddA subfamily.</text>
</comment>
<dbReference type="EC" id="3.1.-.-" evidence="1"/>
<dbReference type="EC" id="5.6.2.4" evidence="1"/>
<dbReference type="EMBL" id="CP000413">
    <property type="protein sequence ID" value="ABJ60406.1"/>
    <property type="molecule type" value="Genomic_DNA"/>
</dbReference>
<dbReference type="RefSeq" id="WP_003652957.1">
    <property type="nucleotide sequence ID" value="NZ_WBMG01000008.1"/>
</dbReference>
<dbReference type="SMR" id="Q043G6"/>
<dbReference type="GeneID" id="29638792"/>
<dbReference type="KEGG" id="lga:LGAS_1031"/>
<dbReference type="HOGENOM" id="CLU_001114_3_1_9"/>
<dbReference type="BioCyc" id="LGAS324831:G1G6Y-1031-MONOMER"/>
<dbReference type="Proteomes" id="UP000000664">
    <property type="component" value="Chromosome"/>
</dbReference>
<dbReference type="GO" id="GO:0005829">
    <property type="term" value="C:cytosol"/>
    <property type="evidence" value="ECO:0007669"/>
    <property type="project" value="TreeGrafter"/>
</dbReference>
<dbReference type="GO" id="GO:0033202">
    <property type="term" value="C:DNA helicase complex"/>
    <property type="evidence" value="ECO:0007669"/>
    <property type="project" value="TreeGrafter"/>
</dbReference>
<dbReference type="GO" id="GO:0043138">
    <property type="term" value="F:3'-5' DNA helicase activity"/>
    <property type="evidence" value="ECO:0007669"/>
    <property type="project" value="UniProtKB-UniRule"/>
</dbReference>
<dbReference type="GO" id="GO:0008408">
    <property type="term" value="F:3'-5' exonuclease activity"/>
    <property type="evidence" value="ECO:0007669"/>
    <property type="project" value="UniProtKB-UniRule"/>
</dbReference>
<dbReference type="GO" id="GO:0005524">
    <property type="term" value="F:ATP binding"/>
    <property type="evidence" value="ECO:0007669"/>
    <property type="project" value="UniProtKB-UniRule"/>
</dbReference>
<dbReference type="GO" id="GO:0016887">
    <property type="term" value="F:ATP hydrolysis activity"/>
    <property type="evidence" value="ECO:0007669"/>
    <property type="project" value="RHEA"/>
</dbReference>
<dbReference type="GO" id="GO:0003690">
    <property type="term" value="F:double-stranded DNA binding"/>
    <property type="evidence" value="ECO:0007669"/>
    <property type="project" value="UniProtKB-UniRule"/>
</dbReference>
<dbReference type="GO" id="GO:0000724">
    <property type="term" value="P:double-strand break repair via homologous recombination"/>
    <property type="evidence" value="ECO:0007669"/>
    <property type="project" value="UniProtKB-UniRule"/>
</dbReference>
<dbReference type="Gene3D" id="3.90.320.10">
    <property type="match status" value="1"/>
</dbReference>
<dbReference type="Gene3D" id="3.40.50.300">
    <property type="entry name" value="P-loop containing nucleotide triphosphate hydrolases"/>
    <property type="match status" value="4"/>
</dbReference>
<dbReference type="HAMAP" id="MF_01451">
    <property type="entry name" value="AddA"/>
    <property type="match status" value="1"/>
</dbReference>
<dbReference type="InterPro" id="IPR014152">
    <property type="entry name" value="AddA"/>
</dbReference>
<dbReference type="InterPro" id="IPR014017">
    <property type="entry name" value="DNA_helicase_UvrD-like_C"/>
</dbReference>
<dbReference type="InterPro" id="IPR000212">
    <property type="entry name" value="DNA_helicase_UvrD/REP"/>
</dbReference>
<dbReference type="InterPro" id="IPR027417">
    <property type="entry name" value="P-loop_NTPase"/>
</dbReference>
<dbReference type="InterPro" id="IPR011604">
    <property type="entry name" value="PDDEXK-like_dom_sf"/>
</dbReference>
<dbReference type="InterPro" id="IPR011335">
    <property type="entry name" value="Restrct_endonuc-II-like"/>
</dbReference>
<dbReference type="InterPro" id="IPR014016">
    <property type="entry name" value="UvrD-like_ATP-bd"/>
</dbReference>
<dbReference type="NCBIfam" id="TIGR02785">
    <property type="entry name" value="addA_Gpos"/>
    <property type="match status" value="1"/>
</dbReference>
<dbReference type="PANTHER" id="PTHR11070:SF48">
    <property type="entry name" value="ATP-DEPENDENT HELICASE_NUCLEASE SUBUNIT A"/>
    <property type="match status" value="1"/>
</dbReference>
<dbReference type="PANTHER" id="PTHR11070">
    <property type="entry name" value="UVRD / RECB / PCRA DNA HELICASE FAMILY MEMBER"/>
    <property type="match status" value="1"/>
</dbReference>
<dbReference type="Pfam" id="PF00580">
    <property type="entry name" value="UvrD-helicase"/>
    <property type="match status" value="1"/>
</dbReference>
<dbReference type="Pfam" id="PF13361">
    <property type="entry name" value="UvrD_C"/>
    <property type="match status" value="1"/>
</dbReference>
<dbReference type="SUPFAM" id="SSF52540">
    <property type="entry name" value="P-loop containing nucleoside triphosphate hydrolases"/>
    <property type="match status" value="1"/>
</dbReference>
<dbReference type="SUPFAM" id="SSF52980">
    <property type="entry name" value="Restriction endonuclease-like"/>
    <property type="match status" value="1"/>
</dbReference>
<dbReference type="PROSITE" id="PS51198">
    <property type="entry name" value="UVRD_HELICASE_ATP_BIND"/>
    <property type="match status" value="1"/>
</dbReference>
<dbReference type="PROSITE" id="PS51217">
    <property type="entry name" value="UVRD_HELICASE_CTER"/>
    <property type="match status" value="1"/>
</dbReference>
<organism>
    <name type="scientific">Lactobacillus gasseri (strain ATCC 33323 / DSM 20243 / BCRC 14619 / CIP 102991 / JCM 1131 / KCTC 3163 / NCIMB 11718 / NCTC 13722 / AM63)</name>
    <dbReference type="NCBI Taxonomy" id="324831"/>
    <lineage>
        <taxon>Bacteria</taxon>
        <taxon>Bacillati</taxon>
        <taxon>Bacillota</taxon>
        <taxon>Bacilli</taxon>
        <taxon>Lactobacillales</taxon>
        <taxon>Lactobacillaceae</taxon>
        <taxon>Lactobacillus</taxon>
    </lineage>
</organism>
<sequence>MTNFTKEQDQAINDAGKDILVSASAGSGKTTVLVERVLKKILSGTPVSSLLIITFTKAAAREMKERIKQKISDQLEIEPDNQFLRSQLLDVDTANISTIDSFCLDVIRRFYYVIDLDPQFSVLTDETQAELLKERALREIEADYLEGDNQDFQDFYDNFSGDRDAEGARNLLLQLYNTATTEPNYEKFLDNLPTCYEVGDNLIRSNLWQQQIKPLLLKEISDLKAEVEALLAEPEINSSDLVKVKENYDIFSNRLDSFWESLNTDQPYNEIRANLMNCKFEKAVRKSKKWSDESIEVYQDSQDLKLDLNDQLKKIFASFFVVEEKEQIAVLQKSEKIVKTIVAAEKKLIQKFSQLKREQNLIDYSDMEQFAFSILTTDTSNAHIAQEYYQEKFNEILIDEYQDVNALQENIIKAIKKKGQNTLFMVGDVKQSIYGFRQARPDLFLSKYHTYGKDNDSEKIILADNFRSTKRVTKTVNDLFNPILTTNFGGIDYKKEGQLQFGASYYPSDLPTASEYIFTDKKQTQSAYEDQYGDEMDFSEVQMVIARIKQLKAENFQVWDRRTQLKRPLEYSDIAIITRTRSDNLQVMQEFAKADLPLFVTDAQNYFQTFELIMIMNYLRLIDNPQQDIPLVAVMRSPLFNFKEPELAQIRVKTPAGNFYTALTSFASVNSSLGKKCKEFLQQLETLRSFAATHRISELIWSIYEKTHLLEIVTGLPNGQQRRVNLESLYERATSYESAGFKGLYQFISFIERMRKNQKDLAQPLLSDKADNAVKLMTIHASKGLEFPIVFVMGLGHQYQTRDLSGNFTISQNELGLTIKEKNYRIDSLVKSLADVQKRQQMLEEEARILYVGLTRAQQKLILVASVNEIENKRKKWVSELDQKKDIIPLVKKINAQSPLDFLGPKLEQKHEFDQTIRDMTSALEEQDKLYYLKFNLDLEPEKIKDQNEDSQEVNSNVNKVVKELYNFKYPFEDATKTTAYQSVSEIKKAFNDPIDTELENSRLISSSNRYLQPIDETPTFLEGQKFTGAEIGTAMHLVLQYYNYEGNKDQENLDQEIDQLVELGKLNSLMVPHLSKEALNWFVMSDFAKEFWKQPDKLHRESQFSSLVNASELFNDFSDPSAKVLVHGTVDGYFEAKDGLILFDYKTDFVDKTNEEQAIEKIKQKYTGQLRLYEQALNEMNNDKKVIGKYLILLDARKVVPVD</sequence>
<reference key="1">
    <citation type="journal article" date="2006" name="Proc. Natl. Acad. Sci. U.S.A.">
        <title>Comparative genomics of the lactic acid bacteria.</title>
        <authorList>
            <person name="Makarova K.S."/>
            <person name="Slesarev A."/>
            <person name="Wolf Y.I."/>
            <person name="Sorokin A."/>
            <person name="Mirkin B."/>
            <person name="Koonin E.V."/>
            <person name="Pavlov A."/>
            <person name="Pavlova N."/>
            <person name="Karamychev V."/>
            <person name="Polouchine N."/>
            <person name="Shakhova V."/>
            <person name="Grigoriev I."/>
            <person name="Lou Y."/>
            <person name="Rohksar D."/>
            <person name="Lucas S."/>
            <person name="Huang K."/>
            <person name="Goodstein D.M."/>
            <person name="Hawkins T."/>
            <person name="Plengvidhya V."/>
            <person name="Welker D."/>
            <person name="Hughes J."/>
            <person name="Goh Y."/>
            <person name="Benson A."/>
            <person name="Baldwin K."/>
            <person name="Lee J.-H."/>
            <person name="Diaz-Muniz I."/>
            <person name="Dosti B."/>
            <person name="Smeianov V."/>
            <person name="Wechter W."/>
            <person name="Barabote R."/>
            <person name="Lorca G."/>
            <person name="Altermann E."/>
            <person name="Barrangou R."/>
            <person name="Ganesan B."/>
            <person name="Xie Y."/>
            <person name="Rawsthorne H."/>
            <person name="Tamir D."/>
            <person name="Parker C."/>
            <person name="Breidt F."/>
            <person name="Broadbent J.R."/>
            <person name="Hutkins R."/>
            <person name="O'Sullivan D."/>
            <person name="Steele J."/>
            <person name="Unlu G."/>
            <person name="Saier M.H. Jr."/>
            <person name="Klaenhammer T."/>
            <person name="Richardson P."/>
            <person name="Kozyavkin S."/>
            <person name="Weimer B.C."/>
            <person name="Mills D.A."/>
        </authorList>
    </citation>
    <scope>NUCLEOTIDE SEQUENCE [LARGE SCALE GENOMIC DNA]</scope>
    <source>
        <strain>ATCC 33323 / DSM 20243 / BCRC 14619 / CIP 102991 / JCM 1131 / KCTC 3163 / NCIMB 11718 / NCTC 13722 / AM63</strain>
    </source>
</reference>
<keyword id="KW-0067">ATP-binding</keyword>
<keyword id="KW-0227">DNA damage</keyword>
<keyword id="KW-0234">DNA repair</keyword>
<keyword id="KW-0238">DNA-binding</keyword>
<keyword id="KW-0269">Exonuclease</keyword>
<keyword id="KW-0347">Helicase</keyword>
<keyword id="KW-0378">Hydrolase</keyword>
<keyword id="KW-0413">Isomerase</keyword>
<keyword id="KW-0540">Nuclease</keyword>
<keyword id="KW-0547">Nucleotide-binding</keyword>
<feature type="chain" id="PRO_0000379282" description="ATP-dependent helicase/nuclease subunit A">
    <location>
        <begin position="1"/>
        <end position="1204"/>
    </location>
</feature>
<feature type="domain" description="UvrD-like helicase ATP-binding" evidence="1">
    <location>
        <begin position="2"/>
        <end position="469"/>
    </location>
</feature>
<feature type="domain" description="UvrD-like helicase C-terminal" evidence="1">
    <location>
        <begin position="497"/>
        <end position="784"/>
    </location>
</feature>
<feature type="binding site" evidence="1">
    <location>
        <begin position="23"/>
        <end position="30"/>
    </location>
    <ligand>
        <name>ATP</name>
        <dbReference type="ChEBI" id="CHEBI:30616"/>
    </ligand>
</feature>
<name>ADDA_LACGA</name>
<gene>
    <name evidence="1" type="primary">addA</name>
    <name type="ordered locus">LGAS_1031</name>
</gene>
<protein>
    <recommendedName>
        <fullName evidence="1">ATP-dependent helicase/nuclease subunit A</fullName>
        <ecNumber evidence="1">3.1.-.-</ecNumber>
        <ecNumber evidence="1">5.6.2.4</ecNumber>
    </recommendedName>
    <alternativeName>
        <fullName evidence="1">ATP-dependent helicase/nuclease AddA</fullName>
    </alternativeName>
    <alternativeName>
        <fullName evidence="1">DNA 3'-5' helicase AddA</fullName>
    </alternativeName>
</protein>
<evidence type="ECO:0000255" key="1">
    <source>
        <dbReference type="HAMAP-Rule" id="MF_01451"/>
    </source>
</evidence>
<proteinExistence type="inferred from homology"/>
<accession>Q043G6</accession>